<evidence type="ECO:0000255" key="1">
    <source>
        <dbReference type="HAMAP-Rule" id="MF_00488"/>
    </source>
</evidence>
<name>LDH_STRZP</name>
<gene>
    <name evidence="1" type="primary">ldh</name>
    <name type="ordered locus">SPP_1258</name>
</gene>
<protein>
    <recommendedName>
        <fullName evidence="1">L-lactate dehydrogenase</fullName>
        <shortName evidence="1">L-LDH</shortName>
        <ecNumber evidence="1">1.1.1.27</ecNumber>
    </recommendedName>
</protein>
<reference key="1">
    <citation type="journal article" date="2010" name="Genome Biol.">
        <title>Structure and dynamics of the pan-genome of Streptococcus pneumoniae and closely related species.</title>
        <authorList>
            <person name="Donati C."/>
            <person name="Hiller N.L."/>
            <person name="Tettelin H."/>
            <person name="Muzzi A."/>
            <person name="Croucher N.J."/>
            <person name="Angiuoli S.V."/>
            <person name="Oggioni M."/>
            <person name="Dunning Hotopp J.C."/>
            <person name="Hu F.Z."/>
            <person name="Riley D.R."/>
            <person name="Covacci A."/>
            <person name="Mitchell T.J."/>
            <person name="Bentley S.D."/>
            <person name="Kilian M."/>
            <person name="Ehrlich G.D."/>
            <person name="Rappuoli R."/>
            <person name="Moxon E.R."/>
            <person name="Masignani V."/>
        </authorList>
    </citation>
    <scope>NUCLEOTIDE SEQUENCE [LARGE SCALE GENOMIC DNA]</scope>
    <source>
        <strain>P1031</strain>
    </source>
</reference>
<organism>
    <name type="scientific">Streptococcus pneumoniae (strain P1031)</name>
    <dbReference type="NCBI Taxonomy" id="488223"/>
    <lineage>
        <taxon>Bacteria</taxon>
        <taxon>Bacillati</taxon>
        <taxon>Bacillota</taxon>
        <taxon>Bacilli</taxon>
        <taxon>Lactobacillales</taxon>
        <taxon>Streptococcaceae</taxon>
        <taxon>Streptococcus</taxon>
    </lineage>
</organism>
<dbReference type="EC" id="1.1.1.27" evidence="1"/>
<dbReference type="EMBL" id="CP000920">
    <property type="protein sequence ID" value="ACO21318.1"/>
    <property type="molecule type" value="Genomic_DNA"/>
</dbReference>
<dbReference type="RefSeq" id="WP_000204727.1">
    <property type="nucleotide sequence ID" value="NC_012467.1"/>
</dbReference>
<dbReference type="SMR" id="C1CKW1"/>
<dbReference type="KEGG" id="spp:SPP_1258"/>
<dbReference type="HOGENOM" id="CLU_045401_1_1_9"/>
<dbReference type="UniPathway" id="UPA00554">
    <property type="reaction ID" value="UER00611"/>
</dbReference>
<dbReference type="GO" id="GO:0005737">
    <property type="term" value="C:cytoplasm"/>
    <property type="evidence" value="ECO:0007669"/>
    <property type="project" value="UniProtKB-SubCell"/>
</dbReference>
<dbReference type="GO" id="GO:0004459">
    <property type="term" value="F:L-lactate dehydrogenase activity"/>
    <property type="evidence" value="ECO:0007669"/>
    <property type="project" value="UniProtKB-UniRule"/>
</dbReference>
<dbReference type="GO" id="GO:0006096">
    <property type="term" value="P:glycolytic process"/>
    <property type="evidence" value="ECO:0007669"/>
    <property type="project" value="UniProtKB-UniRule"/>
</dbReference>
<dbReference type="GO" id="GO:0006089">
    <property type="term" value="P:lactate metabolic process"/>
    <property type="evidence" value="ECO:0007669"/>
    <property type="project" value="TreeGrafter"/>
</dbReference>
<dbReference type="CDD" id="cd05291">
    <property type="entry name" value="HicDH_like"/>
    <property type="match status" value="1"/>
</dbReference>
<dbReference type="FunFam" id="3.40.50.720:FF:000018">
    <property type="entry name" value="Malate dehydrogenase"/>
    <property type="match status" value="1"/>
</dbReference>
<dbReference type="Gene3D" id="3.90.110.10">
    <property type="entry name" value="Lactate dehydrogenase/glycoside hydrolase, family 4, C-terminal"/>
    <property type="match status" value="1"/>
</dbReference>
<dbReference type="Gene3D" id="3.40.50.720">
    <property type="entry name" value="NAD(P)-binding Rossmann-like Domain"/>
    <property type="match status" value="1"/>
</dbReference>
<dbReference type="HAMAP" id="MF_00488">
    <property type="entry name" value="Lactate_dehydrog"/>
    <property type="match status" value="1"/>
</dbReference>
<dbReference type="InterPro" id="IPR001557">
    <property type="entry name" value="L-lactate/malate_DH"/>
</dbReference>
<dbReference type="InterPro" id="IPR011304">
    <property type="entry name" value="L-lactate_DH"/>
</dbReference>
<dbReference type="InterPro" id="IPR018177">
    <property type="entry name" value="L-lactate_DH_AS"/>
</dbReference>
<dbReference type="InterPro" id="IPR022383">
    <property type="entry name" value="Lactate/malate_DH_C"/>
</dbReference>
<dbReference type="InterPro" id="IPR001236">
    <property type="entry name" value="Lactate/malate_DH_N"/>
</dbReference>
<dbReference type="InterPro" id="IPR015955">
    <property type="entry name" value="Lactate_DH/Glyco_Ohase_4_C"/>
</dbReference>
<dbReference type="InterPro" id="IPR036291">
    <property type="entry name" value="NAD(P)-bd_dom_sf"/>
</dbReference>
<dbReference type="NCBIfam" id="TIGR01771">
    <property type="entry name" value="L-LDH-NAD"/>
    <property type="match status" value="1"/>
</dbReference>
<dbReference type="NCBIfam" id="NF000824">
    <property type="entry name" value="PRK00066.1"/>
    <property type="match status" value="1"/>
</dbReference>
<dbReference type="PANTHER" id="PTHR43128">
    <property type="entry name" value="L-2-HYDROXYCARBOXYLATE DEHYDROGENASE (NAD(P)(+))"/>
    <property type="match status" value="1"/>
</dbReference>
<dbReference type="PANTHER" id="PTHR43128:SF16">
    <property type="entry name" value="L-LACTATE DEHYDROGENASE"/>
    <property type="match status" value="1"/>
</dbReference>
<dbReference type="Pfam" id="PF02866">
    <property type="entry name" value="Ldh_1_C"/>
    <property type="match status" value="1"/>
</dbReference>
<dbReference type="Pfam" id="PF00056">
    <property type="entry name" value="Ldh_1_N"/>
    <property type="match status" value="1"/>
</dbReference>
<dbReference type="PIRSF" id="PIRSF000102">
    <property type="entry name" value="Lac_mal_DH"/>
    <property type="match status" value="1"/>
</dbReference>
<dbReference type="PRINTS" id="PR00086">
    <property type="entry name" value="LLDHDRGNASE"/>
</dbReference>
<dbReference type="SUPFAM" id="SSF56327">
    <property type="entry name" value="LDH C-terminal domain-like"/>
    <property type="match status" value="1"/>
</dbReference>
<dbReference type="SUPFAM" id="SSF51735">
    <property type="entry name" value="NAD(P)-binding Rossmann-fold domains"/>
    <property type="match status" value="1"/>
</dbReference>
<dbReference type="PROSITE" id="PS00064">
    <property type="entry name" value="L_LDH"/>
    <property type="match status" value="1"/>
</dbReference>
<accession>C1CKW1</accession>
<comment type="function">
    <text evidence="1">Catalyzes the conversion of lactate to pyruvate.</text>
</comment>
<comment type="catalytic activity">
    <reaction evidence="1">
        <text>(S)-lactate + NAD(+) = pyruvate + NADH + H(+)</text>
        <dbReference type="Rhea" id="RHEA:23444"/>
        <dbReference type="ChEBI" id="CHEBI:15361"/>
        <dbReference type="ChEBI" id="CHEBI:15378"/>
        <dbReference type="ChEBI" id="CHEBI:16651"/>
        <dbReference type="ChEBI" id="CHEBI:57540"/>
        <dbReference type="ChEBI" id="CHEBI:57945"/>
        <dbReference type="EC" id="1.1.1.27"/>
    </reaction>
</comment>
<comment type="activity regulation">
    <text evidence="1">Allosterically activated by fructose 1,6-bisphosphate (FBP).</text>
</comment>
<comment type="pathway">
    <text evidence="1">Fermentation; pyruvate fermentation to lactate; (S)-lactate from pyruvate: step 1/1.</text>
</comment>
<comment type="subunit">
    <text evidence="1">Homotetramer.</text>
</comment>
<comment type="subcellular location">
    <subcellularLocation>
        <location evidence="1">Cytoplasm</location>
    </subcellularLocation>
</comment>
<comment type="similarity">
    <text evidence="1">Belongs to the LDH/MDH superfamily. LDH family.</text>
</comment>
<sequence>MTSTKQHKKVILVGDGAVGSSYAFALVNQGIAQELGIIEIPQLHEKAVGDALDLSHALAFTSPKKIYAAQYSDCADADLVVITAGAPQKPGETRLDLVGKNLAINKSIVTQVVESGFKGIFLVAANPVDVLTYSTWKFSGFPKERVIGSGTSLDSARFRQALAEKLDVDARSVHAYIMGEHGDSEFAVWSHANIAGVNLEEFLKDTQNVQEAELIELFEGVRDAAYTIINKKGATYYGIAVALARITKAILDDENAVLPLSVFQEGQYGVENVFIGQPAVVGAHGIVRPVNIPLNDAETQKMQASAKELQAIIDEAWKNPEFQEASKN</sequence>
<proteinExistence type="inferred from homology"/>
<feature type="chain" id="PRO_1000190782" description="L-lactate dehydrogenase">
    <location>
        <begin position="1"/>
        <end position="328"/>
    </location>
</feature>
<feature type="active site" description="Proton acceptor" evidence="1">
    <location>
        <position position="181"/>
    </location>
</feature>
<feature type="binding site" evidence="1">
    <location>
        <position position="18"/>
    </location>
    <ligand>
        <name>NAD(+)</name>
        <dbReference type="ChEBI" id="CHEBI:57540"/>
    </ligand>
</feature>
<feature type="binding site" evidence="1">
    <location>
        <position position="39"/>
    </location>
    <ligand>
        <name>NAD(+)</name>
        <dbReference type="ChEBI" id="CHEBI:57540"/>
    </ligand>
</feature>
<feature type="binding site" evidence="1">
    <location>
        <position position="46"/>
    </location>
    <ligand>
        <name>NAD(+)</name>
        <dbReference type="ChEBI" id="CHEBI:57540"/>
    </ligand>
</feature>
<feature type="binding site" evidence="1">
    <location>
        <position position="71"/>
    </location>
    <ligand>
        <name>NAD(+)</name>
        <dbReference type="ChEBI" id="CHEBI:57540"/>
    </ligand>
</feature>
<feature type="binding site" evidence="1">
    <location>
        <begin position="85"/>
        <end position="86"/>
    </location>
    <ligand>
        <name>NAD(+)</name>
        <dbReference type="ChEBI" id="CHEBI:57540"/>
    </ligand>
</feature>
<feature type="binding site" evidence="1">
    <location>
        <position position="88"/>
    </location>
    <ligand>
        <name>substrate</name>
    </ligand>
</feature>
<feature type="binding site" evidence="1">
    <location>
        <position position="94"/>
    </location>
    <ligand>
        <name>substrate</name>
    </ligand>
</feature>
<feature type="binding site" evidence="1">
    <location>
        <position position="107"/>
    </location>
    <ligand>
        <name>NAD(+)</name>
        <dbReference type="ChEBI" id="CHEBI:57540"/>
    </ligand>
</feature>
<feature type="binding site" evidence="1">
    <location>
        <begin position="124"/>
        <end position="126"/>
    </location>
    <ligand>
        <name>NAD(+)</name>
        <dbReference type="ChEBI" id="CHEBI:57540"/>
    </ligand>
</feature>
<feature type="binding site" evidence="1">
    <location>
        <begin position="126"/>
        <end position="129"/>
    </location>
    <ligand>
        <name>substrate</name>
    </ligand>
</feature>
<feature type="binding site" evidence="1">
    <location>
        <position position="149"/>
    </location>
    <ligand>
        <name>NAD(+)</name>
        <dbReference type="ChEBI" id="CHEBI:57540"/>
    </ligand>
</feature>
<feature type="binding site" evidence="1">
    <location>
        <begin position="154"/>
        <end position="157"/>
    </location>
    <ligand>
        <name>substrate</name>
    </ligand>
</feature>
<feature type="binding site" evidence="1">
    <location>
        <position position="159"/>
    </location>
    <ligand>
        <name>beta-D-fructose 1,6-bisphosphate</name>
        <dbReference type="ChEBI" id="CHEBI:32966"/>
        <note>allosteric activator</note>
    </ligand>
</feature>
<feature type="binding site" evidence="1">
    <location>
        <position position="174"/>
    </location>
    <ligand>
        <name>beta-D-fructose 1,6-bisphosphate</name>
        <dbReference type="ChEBI" id="CHEBI:32966"/>
        <note>allosteric activator</note>
    </ligand>
</feature>
<feature type="binding site" evidence="1">
    <location>
        <position position="235"/>
    </location>
    <ligand>
        <name>substrate</name>
    </ligand>
</feature>
<feature type="modified residue" description="Phosphotyrosine" evidence="1">
    <location>
        <position position="226"/>
    </location>
</feature>
<keyword id="KW-0021">Allosteric enzyme</keyword>
<keyword id="KW-0963">Cytoplasm</keyword>
<keyword id="KW-0520">NAD</keyword>
<keyword id="KW-0560">Oxidoreductase</keyword>
<keyword id="KW-0597">Phosphoprotein</keyword>